<comment type="function">
    <text evidence="1">Component of the 26S proteasome, a multiprotein complex involved in the ATP-dependent degradation of ubiquitinated proteins. This complex plays a key role in the maintenance of protein homeostasis by removing misfolded or damaged proteins, which could impair cellular functions, and by removing proteins whose functions are no longer required. Therefore, the proteasome participates in numerous cellular processes, including cell cycle progression, apoptosis, or DNA damage repair. PSMC5 belongs to the heterohexameric ring of AAA (ATPases associated with diverse cellular activities) proteins that unfolds ubiquitinated target proteins that are concurrently translocated into a proteolytic chamber and degraded into peptides.</text>
</comment>
<comment type="subunit">
    <text evidence="1 2 3">Component of the 19S proteasome regulatory particle complex (By similarity). The 26S proteasome consists of a 20S core particle (CP) and two 19S regulatory subunits (RP) (By similarity). The regulatory particle is made of a lid composed of 9 subunits, a base containing 6 ATPases including PSMC5 and few additional components (By similarity). Component of a complex with USP49 and RUVBL1 (By similarity). Interacts with PRPF19 (By similarity). Interacts with TRIM5 (By similarity). Interacts with NDC80 (By similarity). Interacts with PAAF1 (By similarity). Interacts, in vitro, with the thyroid hormone receptor (in a thyroid hormone T3-dependent manner) and with retinoid X receptor (RXR) (By similarity). Interacts with ERCC6 (By similarity).</text>
</comment>
<comment type="subcellular location">
    <subcellularLocation>
        <location evidence="1">Cytoplasm</location>
    </subcellularLocation>
    <subcellularLocation>
        <location evidence="1">Nucleus</location>
    </subcellularLocation>
</comment>
<comment type="similarity">
    <text evidence="5">Belongs to the AAA ATPase family.</text>
</comment>
<feature type="initiator methionine" description="Removed" evidence="1">
    <location>
        <position position="1"/>
    </location>
</feature>
<feature type="chain" id="PRO_0000084723" description="26S proteasome regulatory subunit 8">
    <location>
        <begin position="2"/>
        <end position="406"/>
    </location>
</feature>
<feature type="region of interest" description="May mediate interaction with PRPF9" evidence="2">
    <location>
        <begin position="186"/>
        <end position="406"/>
    </location>
</feature>
<feature type="binding site" evidence="4">
    <location>
        <begin position="190"/>
        <end position="197"/>
    </location>
    <ligand>
        <name>ATP</name>
        <dbReference type="ChEBI" id="CHEBI:30616"/>
    </ligand>
</feature>
<feature type="modified residue" description="N-acetylalanine" evidence="1">
    <location>
        <position position="2"/>
    </location>
</feature>
<feature type="modified residue" description="Phosphoserine" evidence="1">
    <location>
        <position position="120"/>
    </location>
</feature>
<feature type="modified residue" description="N6-acetyllysine" evidence="1">
    <location>
        <position position="222"/>
    </location>
</feature>
<sequence>MALDGPEQMELEEGKAGSGLRQYYLSKIEELQLIVNDKSQNLRRLQAQRNELNAKVRLLREELQLLQEQGSYVGEVVRAMDKKKVLVKVHPEGKFVVDVDKNIDINDVTPNCRVALRNDSYTLHKILPNKVDPLVSLMMVEKVPDSTYEMIGGLDKQIKEIKEVIELPVKHPELFEALGIAQPKGVLLYGPPGTGKTLLARAVAHHTDCTFIRVSGSELVQKFIGEGARMVRELFVMAREHAPSIIFMDEIDSIGSSRLEGGSGGDSEVQRTMLELLNQLDGFEATKNIKVIMATNRIDILDSALLRPGRIDRKIEFPPPNEEARLDILKIHSRKMNLTRGINLRKIAELMPGASGAEVKGVCTEAGMYALRERRVHVTQEDFEMAVAKVMQKDSEKNMSIKKLWK</sequence>
<gene>
    <name type="primary">PSMC5</name>
</gene>
<dbReference type="EMBL" id="X89718">
    <property type="protein sequence ID" value="CAA61863.1"/>
    <property type="molecule type" value="Genomic_DNA"/>
</dbReference>
<dbReference type="EMBL" id="X89719">
    <property type="protein sequence ID" value="CAA61864.1"/>
    <property type="molecule type" value="mRNA"/>
</dbReference>
<dbReference type="RefSeq" id="NP_999148.1">
    <property type="nucleotide sequence ID" value="NM_213983.1"/>
</dbReference>
<dbReference type="SMR" id="P62197"/>
<dbReference type="FunCoup" id="P62197">
    <property type="interactions" value="2624"/>
</dbReference>
<dbReference type="IntAct" id="P62197">
    <property type="interactions" value="1"/>
</dbReference>
<dbReference type="STRING" id="9823.ENSSSCP00000064622"/>
<dbReference type="PaxDb" id="9823-ENSSSCP00000018317"/>
<dbReference type="PeptideAtlas" id="P62197"/>
<dbReference type="Ensembl" id="ENSSSCT00000018819.5">
    <property type="protein sequence ID" value="ENSSSCP00000018317.4"/>
    <property type="gene ID" value="ENSSSCG00000017287.5"/>
</dbReference>
<dbReference type="Ensembl" id="ENSSSCT00015067608.1">
    <property type="protein sequence ID" value="ENSSSCP00015027070.1"/>
    <property type="gene ID" value="ENSSSCG00015050234.1"/>
</dbReference>
<dbReference type="Ensembl" id="ENSSSCT00035003982.1">
    <property type="protein sequence ID" value="ENSSSCP00035001339.1"/>
    <property type="gene ID" value="ENSSSCG00035003144.1"/>
</dbReference>
<dbReference type="Ensembl" id="ENSSSCT00045047189.1">
    <property type="protein sequence ID" value="ENSSSCP00045032771.1"/>
    <property type="gene ID" value="ENSSSCG00045027586.1"/>
</dbReference>
<dbReference type="Ensembl" id="ENSSSCT00060095990.1">
    <property type="protein sequence ID" value="ENSSSCP00060041515.1"/>
    <property type="gene ID" value="ENSSSCG00060070251.1"/>
</dbReference>
<dbReference type="Ensembl" id="ENSSSCT00070010510.1">
    <property type="protein sequence ID" value="ENSSSCP00070008632.1"/>
    <property type="gene ID" value="ENSSSCG00070005507.1"/>
</dbReference>
<dbReference type="Ensembl" id="ENSSSCT00115026033">
    <property type="protein sequence ID" value="ENSSSCP00115024659"/>
    <property type="gene ID" value="ENSSSCG00115014886"/>
</dbReference>
<dbReference type="GeneID" id="397043"/>
<dbReference type="KEGG" id="ssc:397043"/>
<dbReference type="CTD" id="5705"/>
<dbReference type="VGNC" id="VGNC:91916">
    <property type="gene designation" value="PSMC5"/>
</dbReference>
<dbReference type="eggNOG" id="KOG0728">
    <property type="taxonomic scope" value="Eukaryota"/>
</dbReference>
<dbReference type="GeneTree" id="ENSGT01020000230346"/>
<dbReference type="HOGENOM" id="CLU_000688_2_0_1"/>
<dbReference type="InParanoid" id="P62197"/>
<dbReference type="OrthoDB" id="1154031at2759"/>
<dbReference type="Reactome" id="R-SSC-1169091">
    <property type="pathway name" value="Activation of NF-kappaB in B cells"/>
</dbReference>
<dbReference type="Reactome" id="R-SSC-1234176">
    <property type="pathway name" value="Oxygen-dependent proline hydroxylation of Hypoxia-inducible Factor Alpha"/>
</dbReference>
<dbReference type="Reactome" id="R-SSC-1236978">
    <property type="pathway name" value="Cross-presentation of soluble exogenous antigens (endosomes)"/>
</dbReference>
<dbReference type="Reactome" id="R-SSC-174084">
    <property type="pathway name" value="Autodegradation of Cdh1 by Cdh1:APC/C"/>
</dbReference>
<dbReference type="Reactome" id="R-SSC-174154">
    <property type="pathway name" value="APC/C:Cdc20 mediated degradation of Securin"/>
</dbReference>
<dbReference type="Reactome" id="R-SSC-174178">
    <property type="pathway name" value="APC/C:Cdh1 mediated degradation of Cdc20 and other APC/C:Cdh1 targeted proteins in late mitosis/early G1"/>
</dbReference>
<dbReference type="Reactome" id="R-SSC-174184">
    <property type="pathway name" value="Cdc20:Phospho-APC/C mediated degradation of Cyclin A"/>
</dbReference>
<dbReference type="Reactome" id="R-SSC-187577">
    <property type="pathway name" value="SCF(Skp2)-mediated degradation of p27/p21"/>
</dbReference>
<dbReference type="Reactome" id="R-SSC-195253">
    <property type="pathway name" value="Degradation of beta-catenin by the destruction complex"/>
</dbReference>
<dbReference type="Reactome" id="R-SSC-202424">
    <property type="pathway name" value="Downstream TCR signaling"/>
</dbReference>
<dbReference type="Reactome" id="R-SSC-2467813">
    <property type="pathway name" value="Separation of Sister Chromatids"/>
</dbReference>
<dbReference type="Reactome" id="R-SSC-2871837">
    <property type="pathway name" value="FCERI mediated NF-kB activation"/>
</dbReference>
<dbReference type="Reactome" id="R-SSC-349425">
    <property type="pathway name" value="Autodegradation of the E3 ubiquitin ligase COP1"/>
</dbReference>
<dbReference type="Reactome" id="R-SSC-350562">
    <property type="pathway name" value="Regulation of ornithine decarboxylase (ODC)"/>
</dbReference>
<dbReference type="Reactome" id="R-SSC-382556">
    <property type="pathway name" value="ABC-family proteins mediated transport"/>
</dbReference>
<dbReference type="Reactome" id="R-SSC-450408">
    <property type="pathway name" value="AUF1 (hnRNP D0) binds and destabilizes mRNA"/>
</dbReference>
<dbReference type="Reactome" id="R-SSC-4608870">
    <property type="pathway name" value="Asymmetric localization of PCP proteins"/>
</dbReference>
<dbReference type="Reactome" id="R-SSC-4641257">
    <property type="pathway name" value="Degradation of AXIN"/>
</dbReference>
<dbReference type="Reactome" id="R-SSC-4641258">
    <property type="pathway name" value="Degradation of DVL"/>
</dbReference>
<dbReference type="Reactome" id="R-SSC-5358346">
    <property type="pathway name" value="Hedgehog ligand biogenesis"/>
</dbReference>
<dbReference type="Reactome" id="R-SSC-5607761">
    <property type="pathway name" value="Dectin-1 mediated noncanonical NF-kB signaling"/>
</dbReference>
<dbReference type="Reactome" id="R-SSC-5607764">
    <property type="pathway name" value="CLEC7A (Dectin-1) signaling"/>
</dbReference>
<dbReference type="Reactome" id="R-SSC-5610780">
    <property type="pathway name" value="Degradation of GLI1 by the proteasome"/>
</dbReference>
<dbReference type="Reactome" id="R-SSC-5610785">
    <property type="pathway name" value="GLI3 is processed to GLI3R by the proteasome"/>
</dbReference>
<dbReference type="Reactome" id="R-SSC-5632684">
    <property type="pathway name" value="Hedgehog 'on' state"/>
</dbReference>
<dbReference type="Reactome" id="R-SSC-5658442">
    <property type="pathway name" value="Regulation of RAS by GAPs"/>
</dbReference>
<dbReference type="Reactome" id="R-SSC-5668541">
    <property type="pathway name" value="TNFR2 non-canonical NF-kB pathway"/>
</dbReference>
<dbReference type="Reactome" id="R-SSC-5676590">
    <property type="pathway name" value="NIK--&gt;noncanonical NF-kB signaling"/>
</dbReference>
<dbReference type="Reactome" id="R-SSC-5687128">
    <property type="pathway name" value="MAPK6/MAPK4 signaling"/>
</dbReference>
<dbReference type="Reactome" id="R-SSC-5689603">
    <property type="pathway name" value="UCH proteinases"/>
</dbReference>
<dbReference type="Reactome" id="R-SSC-5689880">
    <property type="pathway name" value="Ub-specific processing proteases"/>
</dbReference>
<dbReference type="Reactome" id="R-SSC-68867">
    <property type="pathway name" value="Assembly of the pre-replicative complex"/>
</dbReference>
<dbReference type="Reactome" id="R-SSC-68949">
    <property type="pathway name" value="Orc1 removal from chromatin"/>
</dbReference>
<dbReference type="Reactome" id="R-SSC-69017">
    <property type="pathway name" value="CDK-mediated phosphorylation and removal of Cdc6"/>
</dbReference>
<dbReference type="Reactome" id="R-SSC-69481">
    <property type="pathway name" value="G2/M Checkpoints"/>
</dbReference>
<dbReference type="Reactome" id="R-SSC-69601">
    <property type="pathway name" value="Ubiquitin Mediated Degradation of Phosphorylated Cdc25A"/>
</dbReference>
<dbReference type="Reactome" id="R-SSC-75815">
    <property type="pathway name" value="Ubiquitin-dependent degradation of Cyclin D"/>
</dbReference>
<dbReference type="Reactome" id="R-SSC-8852276">
    <property type="pathway name" value="The role of GTSE1 in G2/M progression after G2 checkpoint"/>
</dbReference>
<dbReference type="Reactome" id="R-SSC-8854050">
    <property type="pathway name" value="FBXL7 down-regulates AURKA during mitotic entry and in early mitosis"/>
</dbReference>
<dbReference type="Reactome" id="R-SSC-8939236">
    <property type="pathway name" value="RUNX1 regulates transcription of genes involved in differentiation of HSCs"/>
</dbReference>
<dbReference type="Reactome" id="R-SSC-8939902">
    <property type="pathway name" value="Regulation of RUNX2 expression and activity"/>
</dbReference>
<dbReference type="Reactome" id="R-SSC-8941858">
    <property type="pathway name" value="Regulation of RUNX3 expression and activity"/>
</dbReference>
<dbReference type="Reactome" id="R-SSC-8948751">
    <property type="pathway name" value="Regulation of PTEN stability and activity"/>
</dbReference>
<dbReference type="Reactome" id="R-SSC-8951664">
    <property type="pathway name" value="Neddylation"/>
</dbReference>
<dbReference type="Reactome" id="R-SSC-9020702">
    <property type="pathway name" value="Interleukin-1 signaling"/>
</dbReference>
<dbReference type="Reactome" id="R-SSC-9755511">
    <property type="pathway name" value="KEAP1-NFE2L2 pathway"/>
</dbReference>
<dbReference type="Reactome" id="R-SSC-9762114">
    <property type="pathway name" value="GSK3B and BTRC:CUL1-mediated-degradation of NFE2L2"/>
</dbReference>
<dbReference type="Reactome" id="R-SSC-983168">
    <property type="pathway name" value="Antigen processing: Ubiquitination &amp; Proteasome degradation"/>
</dbReference>
<dbReference type="Reactome" id="R-SSC-9907900">
    <property type="pathway name" value="Proteasome assembly"/>
</dbReference>
<dbReference type="Proteomes" id="UP000008227">
    <property type="component" value="Chromosome 12"/>
</dbReference>
<dbReference type="Proteomes" id="UP000314985">
    <property type="component" value="Chromosome 12"/>
</dbReference>
<dbReference type="Proteomes" id="UP000694570">
    <property type="component" value="Unplaced"/>
</dbReference>
<dbReference type="Proteomes" id="UP000694571">
    <property type="component" value="Unplaced"/>
</dbReference>
<dbReference type="Proteomes" id="UP000694720">
    <property type="component" value="Unplaced"/>
</dbReference>
<dbReference type="Proteomes" id="UP000694722">
    <property type="component" value="Unplaced"/>
</dbReference>
<dbReference type="Proteomes" id="UP000694723">
    <property type="component" value="Unplaced"/>
</dbReference>
<dbReference type="Proteomes" id="UP000694724">
    <property type="component" value="Unplaced"/>
</dbReference>
<dbReference type="Proteomes" id="UP000694725">
    <property type="component" value="Unplaced"/>
</dbReference>
<dbReference type="Proteomes" id="UP000694726">
    <property type="component" value="Unplaced"/>
</dbReference>
<dbReference type="Proteomes" id="UP000694727">
    <property type="component" value="Unplaced"/>
</dbReference>
<dbReference type="Proteomes" id="UP000694728">
    <property type="component" value="Unplaced"/>
</dbReference>
<dbReference type="GO" id="GO:0005737">
    <property type="term" value="C:cytoplasm"/>
    <property type="evidence" value="ECO:0000250"/>
    <property type="project" value="UniProtKB"/>
</dbReference>
<dbReference type="GO" id="GO:0031410">
    <property type="term" value="C:cytoplasmic vesicle"/>
    <property type="evidence" value="ECO:0007669"/>
    <property type="project" value="Ensembl"/>
</dbReference>
<dbReference type="GO" id="GO:0005634">
    <property type="term" value="C:nucleus"/>
    <property type="evidence" value="ECO:0000250"/>
    <property type="project" value="UniProtKB"/>
</dbReference>
<dbReference type="GO" id="GO:0022624">
    <property type="term" value="C:proteasome accessory complex"/>
    <property type="evidence" value="ECO:0000250"/>
    <property type="project" value="UniProtKB"/>
</dbReference>
<dbReference type="GO" id="GO:0000502">
    <property type="term" value="C:proteasome complex"/>
    <property type="evidence" value="ECO:0000250"/>
    <property type="project" value="UniProtKB"/>
</dbReference>
<dbReference type="GO" id="GO:0005838">
    <property type="term" value="C:proteasome regulatory particle"/>
    <property type="evidence" value="ECO:0007669"/>
    <property type="project" value="Ensembl"/>
</dbReference>
<dbReference type="GO" id="GO:0005524">
    <property type="term" value="F:ATP binding"/>
    <property type="evidence" value="ECO:0007669"/>
    <property type="project" value="UniProtKB-KW"/>
</dbReference>
<dbReference type="GO" id="GO:0016887">
    <property type="term" value="F:ATP hydrolysis activity"/>
    <property type="evidence" value="ECO:0007669"/>
    <property type="project" value="InterPro"/>
</dbReference>
<dbReference type="GO" id="GO:0140297">
    <property type="term" value="F:DNA-binding transcription factor binding"/>
    <property type="evidence" value="ECO:0007669"/>
    <property type="project" value="Ensembl"/>
</dbReference>
<dbReference type="GO" id="GO:0140296">
    <property type="term" value="F:general transcription initiation factor binding"/>
    <property type="evidence" value="ECO:0000250"/>
    <property type="project" value="UniProtKB"/>
</dbReference>
<dbReference type="GO" id="GO:0031531">
    <property type="term" value="F:thyrotropin-releasing hormone receptor binding"/>
    <property type="evidence" value="ECO:0000250"/>
    <property type="project" value="UniProtKB"/>
</dbReference>
<dbReference type="GO" id="GO:0045892">
    <property type="term" value="P:negative regulation of DNA-templated transcription"/>
    <property type="evidence" value="ECO:0007669"/>
    <property type="project" value="Ensembl"/>
</dbReference>
<dbReference type="GO" id="GO:0043161">
    <property type="term" value="P:proteasome-mediated ubiquitin-dependent protein catabolic process"/>
    <property type="evidence" value="ECO:0000250"/>
    <property type="project" value="UniProtKB"/>
</dbReference>
<dbReference type="GO" id="GO:0006357">
    <property type="term" value="P:regulation of transcription by RNA polymerase II"/>
    <property type="evidence" value="ECO:0007669"/>
    <property type="project" value="Ensembl"/>
</dbReference>
<dbReference type="CDD" id="cd19502">
    <property type="entry name" value="RecA-like_PAN_like"/>
    <property type="match status" value="1"/>
</dbReference>
<dbReference type="FunFam" id="1.10.8.60:FF:000006">
    <property type="entry name" value="26S protease regulatory subunit 8"/>
    <property type="match status" value="1"/>
</dbReference>
<dbReference type="FunFam" id="2.40.50.140:FF:000044">
    <property type="entry name" value="26S protease regulatory subunit 8"/>
    <property type="match status" value="1"/>
</dbReference>
<dbReference type="FunFam" id="3.40.50.300:FF:000030">
    <property type="entry name" value="26S protease regulatory subunit 8"/>
    <property type="match status" value="1"/>
</dbReference>
<dbReference type="Gene3D" id="1.10.8.60">
    <property type="match status" value="1"/>
</dbReference>
<dbReference type="Gene3D" id="2.40.50.140">
    <property type="entry name" value="Nucleic acid-binding proteins"/>
    <property type="match status" value="1"/>
</dbReference>
<dbReference type="Gene3D" id="3.40.50.300">
    <property type="entry name" value="P-loop containing nucleotide triphosphate hydrolases"/>
    <property type="match status" value="1"/>
</dbReference>
<dbReference type="InterPro" id="IPR050221">
    <property type="entry name" value="26S_Proteasome_ATPase"/>
</dbReference>
<dbReference type="InterPro" id="IPR003593">
    <property type="entry name" value="AAA+_ATPase"/>
</dbReference>
<dbReference type="InterPro" id="IPR041569">
    <property type="entry name" value="AAA_lid_3"/>
</dbReference>
<dbReference type="InterPro" id="IPR003959">
    <property type="entry name" value="ATPase_AAA_core"/>
</dbReference>
<dbReference type="InterPro" id="IPR003960">
    <property type="entry name" value="ATPase_AAA_CS"/>
</dbReference>
<dbReference type="InterPro" id="IPR012340">
    <property type="entry name" value="NA-bd_OB-fold"/>
</dbReference>
<dbReference type="InterPro" id="IPR027417">
    <property type="entry name" value="P-loop_NTPase"/>
</dbReference>
<dbReference type="InterPro" id="IPR032501">
    <property type="entry name" value="Prot_ATP_ID_OB_2nd"/>
</dbReference>
<dbReference type="PANTHER" id="PTHR23073">
    <property type="entry name" value="26S PROTEASOME REGULATORY SUBUNIT"/>
    <property type="match status" value="1"/>
</dbReference>
<dbReference type="Pfam" id="PF00004">
    <property type="entry name" value="AAA"/>
    <property type="match status" value="1"/>
</dbReference>
<dbReference type="Pfam" id="PF17862">
    <property type="entry name" value="AAA_lid_3"/>
    <property type="match status" value="1"/>
</dbReference>
<dbReference type="Pfam" id="PF16450">
    <property type="entry name" value="Prot_ATP_ID_OB_C"/>
    <property type="match status" value="1"/>
</dbReference>
<dbReference type="SMART" id="SM00382">
    <property type="entry name" value="AAA"/>
    <property type="match status" value="1"/>
</dbReference>
<dbReference type="SUPFAM" id="SSF52540">
    <property type="entry name" value="P-loop containing nucleoside triphosphate hydrolases"/>
    <property type="match status" value="1"/>
</dbReference>
<dbReference type="PROSITE" id="PS00674">
    <property type="entry name" value="AAA"/>
    <property type="match status" value="1"/>
</dbReference>
<keyword id="KW-0007">Acetylation</keyword>
<keyword id="KW-0067">ATP-binding</keyword>
<keyword id="KW-0963">Cytoplasm</keyword>
<keyword id="KW-0547">Nucleotide-binding</keyword>
<keyword id="KW-0539">Nucleus</keyword>
<keyword id="KW-0597">Phosphoprotein</keyword>
<keyword id="KW-0647">Proteasome</keyword>
<keyword id="KW-1185">Reference proteome</keyword>
<proteinExistence type="evidence at transcript level"/>
<reference key="1">
    <citation type="journal article" date="1996" name="Mamm. Genome">
        <title>The porcine gene TBP10 encodes a protein homologous to the human Tat-binding protein/26S protease subunit family.</title>
        <authorList>
            <person name="Leeb T."/>
            <person name="Rettenberger G."/>
            <person name="Bruch J."/>
            <person name="Hameister H."/>
            <person name="Brenig B."/>
        </authorList>
    </citation>
    <scope>NUCLEOTIDE SEQUENCE [GENOMIC DNA / MRNA]</scope>
    <source>
        <tissue>Brain</tissue>
        <tissue>Liver</tissue>
    </source>
</reference>
<protein>
    <recommendedName>
        <fullName>26S proteasome regulatory subunit 8</fullName>
    </recommendedName>
    <alternativeName>
        <fullName>26S proteasome AAA-ATPase subunit RPT6</fullName>
    </alternativeName>
    <alternativeName>
        <fullName>Proteasome 26S subunit ATPase 5</fullName>
    </alternativeName>
    <alternativeName>
        <fullName>Proteasome subunit p45</fullName>
    </alternativeName>
    <alternativeName>
        <fullName>Tat-binding protein homolog 10</fullName>
        <shortName>TBP10</shortName>
    </alternativeName>
    <alternativeName>
        <fullName>p45/SUG</fullName>
    </alternativeName>
</protein>
<organism>
    <name type="scientific">Sus scrofa</name>
    <name type="common">Pig</name>
    <dbReference type="NCBI Taxonomy" id="9823"/>
    <lineage>
        <taxon>Eukaryota</taxon>
        <taxon>Metazoa</taxon>
        <taxon>Chordata</taxon>
        <taxon>Craniata</taxon>
        <taxon>Vertebrata</taxon>
        <taxon>Euteleostomi</taxon>
        <taxon>Mammalia</taxon>
        <taxon>Eutheria</taxon>
        <taxon>Laurasiatheria</taxon>
        <taxon>Artiodactyla</taxon>
        <taxon>Suina</taxon>
        <taxon>Suidae</taxon>
        <taxon>Sus</taxon>
    </lineage>
</organism>
<name>PRS8_PIG</name>
<accession>P62197</accession>
<accession>O35051</accession>
<accession>P47210</accession>
<accession>P52915</accession>
<accession>P52916</accession>
<evidence type="ECO:0000250" key="1">
    <source>
        <dbReference type="UniProtKB" id="P62195"/>
    </source>
</evidence>
<evidence type="ECO:0000250" key="2">
    <source>
        <dbReference type="UniProtKB" id="P62196"/>
    </source>
</evidence>
<evidence type="ECO:0000250" key="3">
    <source>
        <dbReference type="UniProtKB" id="P62198"/>
    </source>
</evidence>
<evidence type="ECO:0000255" key="4"/>
<evidence type="ECO:0000305" key="5"/>